<accession>P40407</accession>
<gene>
    <name evidence="3" type="primary">namZ</name>
    <name type="synonym">ybbC</name>
    <name type="synonym">yzbB</name>
    <name type="ordered locus">BSU01650</name>
</gene>
<sequence length="414" mass="46036">MRKTIFAFLTGLMMFGTITAASASPDSKNQTAKKPKVQTGIDTLLPDYKKQLKGKRIGLITNPAGVNTSLKSSVDILYENPDIKLTALFGPEHGVRGDAQAGDEVGSYIDEKTGVPVYSLYGKTKKPTPEMLKNVDILMFDIQDVGTRFYTYIYTMAYAMEAAKENGIPFMVLDRPNPQGGNHIEGPILEPEYASFVGLYPIPLKHGMTIGELASLFNKEFSIDADLTVVKMKHWKRKMDFDDTRLPFVLPSPNMPTVESTFVYPATGLIEGTNISEGRGTTKPFELIGAPFIKSTELEETLNSLHLPGVTFRAASFTPTFSKHQGTLCHGVQLYVTDRDKFEAVKTGLSVIKTIHDLYPEDFEFLSTGSFDKLAGNGWIRTKIENGTSVENIINSYEKTLQQFSKTRKKYLIY</sequence>
<reference key="1">
    <citation type="journal article" date="1994" name="Biochim. Biophys. Acta">
        <title>Isolation of Tn917 insertional mutants of Bacillus subtilis that are resistant to the protonophore carbonyl cyanide m-chlorophenylhydrazone.</title>
        <authorList>
            <person name="Quirk P.G."/>
            <person name="Guffanti A.A."/>
            <person name="Clejan S."/>
            <person name="Cheng J."/>
            <person name="Krulwich T.A."/>
        </authorList>
    </citation>
    <scope>NUCLEOTIDE SEQUENCE [GENOMIC DNA]</scope>
    <source>
        <strain>BD99 / MS94</strain>
    </source>
</reference>
<reference key="2">
    <citation type="journal article" date="1997" name="Microbiology">
        <title>Sequence and analysis of a 31 kb segment of the Bacillus subtilis chromosome in the area of the rrnH and rrnG operons.</title>
        <authorList>
            <person name="Liu H."/>
            <person name="Haga K."/>
            <person name="Yasumoto K."/>
            <person name="Ohashi Y."/>
            <person name="Yoshikawa H."/>
            <person name="Takahashi H."/>
        </authorList>
    </citation>
    <scope>NUCLEOTIDE SEQUENCE [GENOMIC DNA]</scope>
    <source>
        <strain>168</strain>
    </source>
</reference>
<reference key="3">
    <citation type="journal article" date="1997" name="Nature">
        <title>The complete genome sequence of the Gram-positive bacterium Bacillus subtilis.</title>
        <authorList>
            <person name="Kunst F."/>
            <person name="Ogasawara N."/>
            <person name="Moszer I."/>
            <person name="Albertini A.M."/>
            <person name="Alloni G."/>
            <person name="Azevedo V."/>
            <person name="Bertero M.G."/>
            <person name="Bessieres P."/>
            <person name="Bolotin A."/>
            <person name="Borchert S."/>
            <person name="Borriss R."/>
            <person name="Boursier L."/>
            <person name="Brans A."/>
            <person name="Braun M."/>
            <person name="Brignell S.C."/>
            <person name="Bron S."/>
            <person name="Brouillet S."/>
            <person name="Bruschi C.V."/>
            <person name="Caldwell B."/>
            <person name="Capuano V."/>
            <person name="Carter N.M."/>
            <person name="Choi S.-K."/>
            <person name="Codani J.-J."/>
            <person name="Connerton I.F."/>
            <person name="Cummings N.J."/>
            <person name="Daniel R.A."/>
            <person name="Denizot F."/>
            <person name="Devine K.M."/>
            <person name="Duesterhoeft A."/>
            <person name="Ehrlich S.D."/>
            <person name="Emmerson P.T."/>
            <person name="Entian K.-D."/>
            <person name="Errington J."/>
            <person name="Fabret C."/>
            <person name="Ferrari E."/>
            <person name="Foulger D."/>
            <person name="Fritz C."/>
            <person name="Fujita M."/>
            <person name="Fujita Y."/>
            <person name="Fuma S."/>
            <person name="Galizzi A."/>
            <person name="Galleron N."/>
            <person name="Ghim S.-Y."/>
            <person name="Glaser P."/>
            <person name="Goffeau A."/>
            <person name="Golightly E.J."/>
            <person name="Grandi G."/>
            <person name="Guiseppi G."/>
            <person name="Guy B.J."/>
            <person name="Haga K."/>
            <person name="Haiech J."/>
            <person name="Harwood C.R."/>
            <person name="Henaut A."/>
            <person name="Hilbert H."/>
            <person name="Holsappel S."/>
            <person name="Hosono S."/>
            <person name="Hullo M.-F."/>
            <person name="Itaya M."/>
            <person name="Jones L.-M."/>
            <person name="Joris B."/>
            <person name="Karamata D."/>
            <person name="Kasahara Y."/>
            <person name="Klaerr-Blanchard M."/>
            <person name="Klein C."/>
            <person name="Kobayashi Y."/>
            <person name="Koetter P."/>
            <person name="Koningstein G."/>
            <person name="Krogh S."/>
            <person name="Kumano M."/>
            <person name="Kurita K."/>
            <person name="Lapidus A."/>
            <person name="Lardinois S."/>
            <person name="Lauber J."/>
            <person name="Lazarevic V."/>
            <person name="Lee S.-M."/>
            <person name="Levine A."/>
            <person name="Liu H."/>
            <person name="Masuda S."/>
            <person name="Mauel C."/>
            <person name="Medigue C."/>
            <person name="Medina N."/>
            <person name="Mellado R.P."/>
            <person name="Mizuno M."/>
            <person name="Moestl D."/>
            <person name="Nakai S."/>
            <person name="Noback M."/>
            <person name="Noone D."/>
            <person name="O'Reilly M."/>
            <person name="Ogawa K."/>
            <person name="Ogiwara A."/>
            <person name="Oudega B."/>
            <person name="Park S.-H."/>
            <person name="Parro V."/>
            <person name="Pohl T.M."/>
            <person name="Portetelle D."/>
            <person name="Porwollik S."/>
            <person name="Prescott A.M."/>
            <person name="Presecan E."/>
            <person name="Pujic P."/>
            <person name="Purnelle B."/>
            <person name="Rapoport G."/>
            <person name="Rey M."/>
            <person name="Reynolds S."/>
            <person name="Rieger M."/>
            <person name="Rivolta C."/>
            <person name="Rocha E."/>
            <person name="Roche B."/>
            <person name="Rose M."/>
            <person name="Sadaie Y."/>
            <person name="Sato T."/>
            <person name="Scanlan E."/>
            <person name="Schleich S."/>
            <person name="Schroeter R."/>
            <person name="Scoffone F."/>
            <person name="Sekiguchi J."/>
            <person name="Sekowska A."/>
            <person name="Seror S.J."/>
            <person name="Serror P."/>
            <person name="Shin B.-S."/>
            <person name="Soldo B."/>
            <person name="Sorokin A."/>
            <person name="Tacconi E."/>
            <person name="Takagi T."/>
            <person name="Takahashi H."/>
            <person name="Takemaru K."/>
            <person name="Takeuchi M."/>
            <person name="Tamakoshi A."/>
            <person name="Tanaka T."/>
            <person name="Terpstra P."/>
            <person name="Tognoni A."/>
            <person name="Tosato V."/>
            <person name="Uchiyama S."/>
            <person name="Vandenbol M."/>
            <person name="Vannier F."/>
            <person name="Vassarotti A."/>
            <person name="Viari A."/>
            <person name="Wambutt R."/>
            <person name="Wedler E."/>
            <person name="Wedler H."/>
            <person name="Weitzenegger T."/>
            <person name="Winters P."/>
            <person name="Wipat A."/>
            <person name="Yamamoto H."/>
            <person name="Yamane K."/>
            <person name="Yasumoto K."/>
            <person name="Yata K."/>
            <person name="Yoshida K."/>
            <person name="Yoshikawa H.-F."/>
            <person name="Zumstein E."/>
            <person name="Yoshikawa H."/>
            <person name="Danchin A."/>
        </authorList>
    </citation>
    <scope>NUCLEOTIDE SEQUENCE [LARGE SCALE GENOMIC DNA]</scope>
    <source>
        <strain>168</strain>
    </source>
</reference>
<reference key="4">
    <citation type="journal article" date="2021" name="J. Biol. Chem.">
        <title>The exo-beta-N-acetylmuramidase NamZ from Bacillus subtilis is the founding member of a family of exo-lytic peptidoglycan hexosaminidases.</title>
        <authorList>
            <person name="Mueller M."/>
            <person name="Calvert M."/>
            <person name="Hottmann I."/>
            <person name="Kluj R.M."/>
            <person name="Teufel T."/>
            <person name="Balbuchta K."/>
            <person name="Engelbrecht A."/>
            <person name="Selim K.A."/>
            <person name="Xu Q."/>
            <person name="Borisova M."/>
            <person name="Titz A."/>
            <person name="Mayer C."/>
        </authorList>
    </citation>
    <scope>FUNCTION</scope>
    <scope>CATALYTIC ACTIVITY</scope>
    <scope>BIOPHYSICOCHEMICAL PROPERTIES</scope>
    <scope>SUBUNIT</scope>
    <scope>SUBCELLULAR LOCATION</scope>
    <scope>DOMAIN</scope>
    <scope>DISRUPTION PHENOTYPE</scope>
    <source>
        <strain>168</strain>
    </source>
</reference>
<comment type="function">
    <text evidence="2">Catalyzes the exo-lytic cleavage of beta-1,4-N-acetylmuramate (beta-1,4-MurNAc) from the non-reducing ends of peptidoglycan chains (PubMed:33684445). Specifically hydrolyzes the natural, peptidoglycan-derived disaccharide MurNAc-GlcNAc and the artificial substrate para-nitrophenyl beta-N-acetylmuramic acid (pNP-MurNAc) (PubMed:33684445). Requires a MurNAc entity at the non-reducing end, and cannot cleave GlcNAc-MurNAc (PubMed:33684445). Probably plays a role in cell wall turnover and recycling (PubMed:33684445).</text>
</comment>
<comment type="catalytic activity">
    <reaction evidence="2">
        <text>Hydrolysis of terminal, non-reducing N-acetylmuramic residues.</text>
        <dbReference type="EC" id="3.2.1.92"/>
    </reaction>
</comment>
<comment type="biophysicochemical properties">
    <kinetics>
        <KM evidence="2">3.59 mM for MurNAc-GlcNAc</KM>
        <KM evidence="2">0.125 mM for pNP-MurNAc</KM>
        <Vmax evidence="2">88.64 umol/min/mg enzyme with MurNAc-GlcNAc as substrate</Vmax>
        <Vmax evidence="2">1.45 umol/min/mg enzyme with pNP-MurNAc as substrate</Vmax>
        <text evidence="2">kcat is 66.25 sec(-1) with MurNAc-GlcNAc as substrate (PubMed:33684445). kcat is 1.08 sec(-1) with pNP-MurNAc as substrate (PubMed:33684445).</text>
    </kinetics>
    <phDependence>
        <text evidence="2">Optimum pH is 6.0-8.0.</text>
    </phDependence>
    <temperatureDependence>
        <text evidence="2">Optimum temperature is 37 degrees Celsius. Stable from 4 to 37 degrees Celsius.</text>
    </temperatureDependence>
</comment>
<comment type="subunit">
    <text evidence="2">Homodimer in solution.</text>
</comment>
<comment type="subcellular location">
    <subcellularLocation>
        <location evidence="5">Secreted</location>
    </subcellularLocation>
</comment>
<comment type="domain">
    <text evidence="2">Contains an N-terminal catalytic domain and a C-terminal auxiliary domain (PubMed:33684445). A putative active site is located in a cleft within the interface of two subdomains (PubMed:33684445).</text>
</comment>
<comment type="disruption phenotype">
    <text evidence="2">Deletion mutant accumulates specific cell wall fragments and shows growth defects under starvation conditions.</text>
</comment>
<comment type="similarity">
    <text evidence="5">Belongs to the glycoside hydrolase 171 family.</text>
</comment>
<feature type="signal peptide" evidence="1">
    <location>
        <begin position="1"/>
        <end position="23"/>
    </location>
</feature>
<feature type="chain" id="PRO_0000013689" description="Peptidoglycan beta-N-acetylmuramidase NamZ">
    <location>
        <begin position="24"/>
        <end position="414"/>
    </location>
</feature>
<keyword id="KW-0961">Cell wall biogenesis/degradation</keyword>
<keyword id="KW-0378">Hydrolase</keyword>
<keyword id="KW-1185">Reference proteome</keyword>
<keyword id="KW-0964">Secreted</keyword>
<keyword id="KW-0732">Signal</keyword>
<proteinExistence type="evidence at protein level"/>
<dbReference type="EC" id="3.2.1.92" evidence="2"/>
<dbReference type="EMBL" id="L19954">
    <property type="protein sequence ID" value="AAA64352.1"/>
    <property type="molecule type" value="Genomic_DNA"/>
</dbReference>
<dbReference type="EMBL" id="AB002150">
    <property type="protein sequence ID" value="BAA19498.1"/>
    <property type="molecule type" value="Genomic_DNA"/>
</dbReference>
<dbReference type="EMBL" id="AL009126">
    <property type="protein sequence ID" value="CAB11941.1"/>
    <property type="molecule type" value="Genomic_DNA"/>
</dbReference>
<dbReference type="PIR" id="I39840">
    <property type="entry name" value="I39840"/>
</dbReference>
<dbReference type="RefSeq" id="NP_388046.1">
    <property type="nucleotide sequence ID" value="NC_000964.3"/>
</dbReference>
<dbReference type="RefSeq" id="WP_003234976.1">
    <property type="nucleotide sequence ID" value="NZ_OZ025638.1"/>
</dbReference>
<dbReference type="SMR" id="P40407"/>
<dbReference type="FunCoup" id="P40407">
    <property type="interactions" value="74"/>
</dbReference>
<dbReference type="STRING" id="224308.BSU01650"/>
<dbReference type="PaxDb" id="224308-BSU01650"/>
<dbReference type="EnsemblBacteria" id="CAB11941">
    <property type="protein sequence ID" value="CAB11941"/>
    <property type="gene ID" value="BSU_01650"/>
</dbReference>
<dbReference type="GeneID" id="938889"/>
<dbReference type="KEGG" id="bsu:BSU01650"/>
<dbReference type="PATRIC" id="fig|224308.179.peg.171"/>
<dbReference type="eggNOG" id="COG3876">
    <property type="taxonomic scope" value="Bacteria"/>
</dbReference>
<dbReference type="InParanoid" id="P40407"/>
<dbReference type="OrthoDB" id="9801061at2"/>
<dbReference type="PhylomeDB" id="P40407"/>
<dbReference type="BioCyc" id="BSUB:BSU01650-MONOMER"/>
<dbReference type="Proteomes" id="UP000001570">
    <property type="component" value="Chromosome"/>
</dbReference>
<dbReference type="GO" id="GO:0005576">
    <property type="term" value="C:extracellular region"/>
    <property type="evidence" value="ECO:0007669"/>
    <property type="project" value="UniProtKB-SubCell"/>
</dbReference>
<dbReference type="GO" id="GO:0033922">
    <property type="term" value="F:peptidoglycan beta-N-acetylmuramidase activity"/>
    <property type="evidence" value="ECO:0007669"/>
    <property type="project" value="InterPro"/>
</dbReference>
<dbReference type="GO" id="GO:0071555">
    <property type="term" value="P:cell wall organization"/>
    <property type="evidence" value="ECO:0007669"/>
    <property type="project" value="UniProtKB-KW"/>
</dbReference>
<dbReference type="Gene3D" id="3.90.1150.140">
    <property type="match status" value="1"/>
</dbReference>
<dbReference type="Gene3D" id="3.40.50.12170">
    <property type="entry name" value="Uncharacterised protein PF07075, DUF1343"/>
    <property type="match status" value="1"/>
</dbReference>
<dbReference type="InterPro" id="IPR008302">
    <property type="entry name" value="NamZ"/>
</dbReference>
<dbReference type="InterPro" id="IPR048503">
    <property type="entry name" value="NamZ_C"/>
</dbReference>
<dbReference type="InterPro" id="IPR048502">
    <property type="entry name" value="NamZ_N"/>
</dbReference>
<dbReference type="PANTHER" id="PTHR42915">
    <property type="entry name" value="HYPOTHETICAL 460 KDA PROTEIN IN FEUA-SIGW INTERGENIC REGION [PRECURSOR]"/>
    <property type="match status" value="1"/>
</dbReference>
<dbReference type="PANTHER" id="PTHR42915:SF1">
    <property type="entry name" value="PEPTIDOGLYCAN BETA-N-ACETYLMURAMIDASE NAMZ"/>
    <property type="match status" value="1"/>
</dbReference>
<dbReference type="Pfam" id="PF20732">
    <property type="entry name" value="NamZ_C"/>
    <property type="match status" value="1"/>
</dbReference>
<dbReference type="Pfam" id="PF07075">
    <property type="entry name" value="NamZ_N"/>
    <property type="match status" value="1"/>
</dbReference>
<dbReference type="PIRSF" id="PIRSF016719">
    <property type="entry name" value="UCP016719"/>
    <property type="match status" value="1"/>
</dbReference>
<protein>
    <recommendedName>
        <fullName evidence="4">Peptidoglycan beta-N-acetylmuramidase NamZ</fullName>
        <ecNumber evidence="2">3.2.1.92</ecNumber>
    </recommendedName>
    <alternativeName>
        <fullName evidence="3">Exo-beta-N-acetylmuramidase NamZ</fullName>
    </alternativeName>
    <alternativeName>
        <fullName>ORF2</fullName>
    </alternativeName>
</protein>
<evidence type="ECO:0000255" key="1"/>
<evidence type="ECO:0000269" key="2">
    <source>
    </source>
</evidence>
<evidence type="ECO:0000303" key="3">
    <source>
    </source>
</evidence>
<evidence type="ECO:0000305" key="4"/>
<evidence type="ECO:0000305" key="5">
    <source>
    </source>
</evidence>
<name>NAMZ_BACSU</name>
<organism>
    <name type="scientific">Bacillus subtilis (strain 168)</name>
    <dbReference type="NCBI Taxonomy" id="224308"/>
    <lineage>
        <taxon>Bacteria</taxon>
        <taxon>Bacillati</taxon>
        <taxon>Bacillota</taxon>
        <taxon>Bacilli</taxon>
        <taxon>Bacillales</taxon>
        <taxon>Bacillaceae</taxon>
        <taxon>Bacillus</taxon>
    </lineage>
</organism>